<keyword id="KW-0067">ATP-binding</keyword>
<keyword id="KW-0150">Chloroplast</keyword>
<keyword id="KW-0436">Ligase</keyword>
<keyword id="KW-0547">Nucleotide-binding</keyword>
<keyword id="KW-0934">Plastid</keyword>
<keyword id="KW-0819">tRNA processing</keyword>
<geneLocation type="chloroplast"/>
<feature type="chain" id="PRO_0000277070" description="tRNA(Ile)-lysidine synthase, chloroplastic">
    <location>
        <begin position="1"/>
        <end position="600"/>
    </location>
</feature>
<feature type="binding site" evidence="1">
    <location>
        <begin position="35"/>
        <end position="40"/>
    </location>
    <ligand>
        <name>ATP</name>
        <dbReference type="ChEBI" id="CHEBI:30616"/>
    </ligand>
</feature>
<evidence type="ECO:0000255" key="1">
    <source>
        <dbReference type="HAMAP-Rule" id="MF_01161"/>
    </source>
</evidence>
<sequence length="600" mass="70685">MTNKLDCLKLINFIEKSNLFTTNKIRDKKLLIAFSGGQDSSCLLTIFYILSKKWGFKLGAVYCNHCWTDSPQSSLSAFDTLQMFDIPFYFVESPNSEPMKPEQKARDWRYSSFYTISKWEDYDFVLTGHSLSDCVETVLFNLFRGSGLKGICSLKEDQKFSNLKTNDFFFQKTVCFLDPFFYFSDKKGNPFFRKYRLFQSMSFLSIFPKFDFFAFGENCAIDKSNFPLKNKSKGKNLQFLTSFDIKNWFGIKKICRFCFLDKIGQTGIKKKRGTNRVPILIFSRRVNKTTSPLALNFQTKNKRVDRKSFLFRFSLAFALPLAFALRAKGEKVRKNALLNQIKPVSFFFKTKKDKTETNLFHRYLQTIKKLQNRDKISSFITIFRPFILTLGNVKIKGKKIKNKNLPFQIKKLIRKKEKEKGILWNSLSKLDNKDKLISNQIQKKGFKLIPKFILTKDKKSFSNFPPFIFDQLEKTFRKEKVDTKPRNSSPQFEVLFNKLSQPSSDKKNVDFIVFRPLIKITRETLFLFSNNLKIPIYYDKSNKDLNITRNYIRKVLVPLLKKINPRVEENIYKFSKIIEFYYQVFGDLKCPSDRFDIFNP</sequence>
<protein>
    <recommendedName>
        <fullName evidence="1">tRNA(Ile)-lysidine synthase, chloroplastic</fullName>
        <ecNumber evidence="1">6.3.4.19</ecNumber>
    </recommendedName>
    <alternativeName>
        <fullName evidence="1">tRNA(Ile)-2-lysyl-cytidine synthase</fullName>
    </alternativeName>
    <alternativeName>
        <fullName evidence="1">tRNA(Ile)-lysidine synthetase</fullName>
    </alternativeName>
</protein>
<dbReference type="EC" id="6.3.4.19" evidence="1"/>
<dbReference type="EMBL" id="AY835431">
    <property type="protein sequence ID" value="AAV80602.1"/>
    <property type="molecule type" value="Genomic_DNA"/>
</dbReference>
<dbReference type="SMR" id="Q3ZJ89"/>
<dbReference type="GO" id="GO:0009507">
    <property type="term" value="C:chloroplast"/>
    <property type="evidence" value="ECO:0007669"/>
    <property type="project" value="UniProtKB-SubCell"/>
</dbReference>
<dbReference type="GO" id="GO:0005524">
    <property type="term" value="F:ATP binding"/>
    <property type="evidence" value="ECO:0007669"/>
    <property type="project" value="UniProtKB-UniRule"/>
</dbReference>
<dbReference type="GO" id="GO:0032267">
    <property type="term" value="F:tRNA(Ile)-lysidine synthase activity"/>
    <property type="evidence" value="ECO:0007669"/>
    <property type="project" value="UniProtKB-EC"/>
</dbReference>
<dbReference type="GO" id="GO:0006400">
    <property type="term" value="P:tRNA modification"/>
    <property type="evidence" value="ECO:0007669"/>
    <property type="project" value="UniProtKB-UniRule"/>
</dbReference>
<dbReference type="CDD" id="cd01992">
    <property type="entry name" value="TilS_N"/>
    <property type="match status" value="1"/>
</dbReference>
<dbReference type="Gene3D" id="3.40.50.620">
    <property type="entry name" value="HUPs"/>
    <property type="match status" value="2"/>
</dbReference>
<dbReference type="HAMAP" id="MF_01161">
    <property type="entry name" value="tRNA_Ile_lys_synt"/>
    <property type="match status" value="1"/>
</dbReference>
<dbReference type="InterPro" id="IPR014729">
    <property type="entry name" value="Rossmann-like_a/b/a_fold"/>
</dbReference>
<dbReference type="InterPro" id="IPR011063">
    <property type="entry name" value="TilS/TtcA_N"/>
</dbReference>
<dbReference type="InterPro" id="IPR012094">
    <property type="entry name" value="tRNA_Ile_lys_synt"/>
</dbReference>
<dbReference type="InterPro" id="IPR012795">
    <property type="entry name" value="tRNA_Ile_lys_synt_N"/>
</dbReference>
<dbReference type="NCBIfam" id="TIGR02432">
    <property type="entry name" value="lysidine_TilS_N"/>
    <property type="match status" value="1"/>
</dbReference>
<dbReference type="PANTHER" id="PTHR43033">
    <property type="entry name" value="TRNA(ILE)-LYSIDINE SYNTHASE-RELATED"/>
    <property type="match status" value="1"/>
</dbReference>
<dbReference type="PANTHER" id="PTHR43033:SF1">
    <property type="entry name" value="TRNA(ILE)-LYSIDINE SYNTHASE-RELATED"/>
    <property type="match status" value="1"/>
</dbReference>
<dbReference type="Pfam" id="PF01171">
    <property type="entry name" value="ATP_bind_3"/>
    <property type="match status" value="2"/>
</dbReference>
<dbReference type="SUPFAM" id="SSF52402">
    <property type="entry name" value="Adenine nucleotide alpha hydrolases-like"/>
    <property type="match status" value="2"/>
</dbReference>
<reference key="1">
    <citation type="journal article" date="2005" name="Mol. Biol. Evol.">
        <title>The chloroplast genome sequence of the green alga Pseudendoclonium akinetum (Ulvophyceae) reveals unusual structural features and new insights into the branching order of chlorophyte lineages.</title>
        <authorList>
            <person name="Pombert J.-F."/>
            <person name="Otis C."/>
            <person name="Lemieux C."/>
            <person name="Turmel M."/>
        </authorList>
    </citation>
    <scope>NUCLEOTIDE SEQUENCE [LARGE SCALE GENOMIC DNA]</scope>
    <source>
        <strain>UTEX 1912</strain>
    </source>
</reference>
<name>TILS_TUPAK</name>
<accession>Q3ZJ89</accession>
<comment type="function">
    <text evidence="1">Ligates lysine onto the cytidine present at position 34 of the AUA codon-specific tRNA(Ile) that contains the anticodon CAU, in an ATP-dependent manner. Cytidine is converted to lysidine, thus changing the amino acid specificity of the tRNA from methionine to isoleucine.</text>
</comment>
<comment type="catalytic activity">
    <reaction evidence="1">
        <text>cytidine(34) in tRNA(Ile2) + L-lysine + ATP = lysidine(34) in tRNA(Ile2) + AMP + diphosphate + H(+)</text>
        <dbReference type="Rhea" id="RHEA:43744"/>
        <dbReference type="Rhea" id="RHEA-COMP:10625"/>
        <dbReference type="Rhea" id="RHEA-COMP:10670"/>
        <dbReference type="ChEBI" id="CHEBI:15378"/>
        <dbReference type="ChEBI" id="CHEBI:30616"/>
        <dbReference type="ChEBI" id="CHEBI:32551"/>
        <dbReference type="ChEBI" id="CHEBI:33019"/>
        <dbReference type="ChEBI" id="CHEBI:82748"/>
        <dbReference type="ChEBI" id="CHEBI:83665"/>
        <dbReference type="ChEBI" id="CHEBI:456215"/>
        <dbReference type="EC" id="6.3.4.19"/>
    </reaction>
</comment>
<comment type="subcellular location">
    <subcellularLocation>
        <location>Plastid</location>
        <location>Chloroplast</location>
    </subcellularLocation>
</comment>
<comment type="domain">
    <text>The N-terminal region contains the highly conserved SGGXDS motif, predicted to be a P-loop motif involved in ATP binding.</text>
</comment>
<comment type="similarity">
    <text evidence="1">Belongs to the tRNA(Ile)-lysidine synthase family.</text>
</comment>
<organism>
    <name type="scientific">Tupiella akineta</name>
    <name type="common">Green alga</name>
    <name type="synonym">Pseudendoclonium akinetum</name>
    <dbReference type="NCBI Taxonomy" id="160070"/>
    <lineage>
        <taxon>Eukaryota</taxon>
        <taxon>Viridiplantae</taxon>
        <taxon>Chlorophyta</taxon>
        <taxon>Ulvophyceae</taxon>
        <taxon>OUU clade</taxon>
        <taxon>Ulotrichales</taxon>
        <taxon>Tupiellaceae</taxon>
        <taxon>Tupiella</taxon>
    </lineage>
</organism>
<proteinExistence type="inferred from homology"/>
<gene>
    <name evidence="1" type="primary">tilS</name>
</gene>